<organism>
    <name type="scientific">Lake Victoria marburgvirus (strain Angola/2005)</name>
    <name type="common">MARV</name>
    <dbReference type="NCBI Taxonomy" id="378830"/>
    <lineage>
        <taxon>Viruses</taxon>
        <taxon>Riboviria</taxon>
        <taxon>Orthornavirae</taxon>
        <taxon>Negarnaviricota</taxon>
        <taxon>Haploviricotina</taxon>
        <taxon>Monjiviricetes</taxon>
        <taxon>Mononegavirales</taxon>
        <taxon>Filoviridae</taxon>
        <taxon>Orthomarburgvirus</taxon>
        <taxon>Orthomarburgvirus marburgense</taxon>
    </lineage>
</organism>
<dbReference type="EC" id="2.7.7.48" evidence="3"/>
<dbReference type="EC" id="3.6.1.-" evidence="2"/>
<dbReference type="EC" id="2.7.7.88" evidence="2"/>
<dbReference type="EC" id="2.1.1.375" evidence="2"/>
<dbReference type="EMBL" id="DQ447653">
    <property type="protein sequence ID" value="ABE27018.1"/>
    <property type="molecule type" value="Genomic_RNA"/>
</dbReference>
<dbReference type="EMBL" id="DQ447654">
    <property type="protein sequence ID" value="ABE27025.1"/>
    <property type="molecule type" value="Genomic_RNA"/>
</dbReference>
<dbReference type="EMBL" id="DQ447655">
    <property type="protein sequence ID" value="ABE27032.1"/>
    <property type="molecule type" value="Genomic_RNA"/>
</dbReference>
<dbReference type="EMBL" id="DQ447656">
    <property type="protein sequence ID" value="ABE27039.1"/>
    <property type="molecule type" value="Genomic_RNA"/>
</dbReference>
<dbReference type="EMBL" id="DQ447657">
    <property type="protein sequence ID" value="ABE27046.1"/>
    <property type="molecule type" value="Genomic_RNA"/>
</dbReference>
<dbReference type="EMBL" id="DQ447658">
    <property type="protein sequence ID" value="ABE27053.1"/>
    <property type="molecule type" value="Genomic_RNA"/>
</dbReference>
<dbReference type="EMBL" id="DQ447659">
    <property type="protein sequence ID" value="ABE27060.1"/>
    <property type="molecule type" value="Genomic_RNA"/>
</dbReference>
<dbReference type="SMR" id="Q1PD54"/>
<dbReference type="Proteomes" id="UP000008242">
    <property type="component" value="Genome"/>
</dbReference>
<dbReference type="Proteomes" id="UP000097432">
    <property type="component" value="Genome"/>
</dbReference>
<dbReference type="Proteomes" id="UP000102513">
    <property type="component" value="Genome"/>
</dbReference>
<dbReference type="Proteomes" id="UP000115353">
    <property type="component" value="Genome"/>
</dbReference>
<dbReference type="Proteomes" id="UP000130744">
    <property type="component" value="Genome"/>
</dbReference>
<dbReference type="Proteomes" id="UP000168007">
    <property type="component" value="Genome"/>
</dbReference>
<dbReference type="Proteomes" id="UP000171838">
    <property type="component" value="Genome"/>
</dbReference>
<dbReference type="GO" id="GO:0030430">
    <property type="term" value="C:host cell cytoplasm"/>
    <property type="evidence" value="ECO:0007669"/>
    <property type="project" value="UniProtKB-SubCell"/>
</dbReference>
<dbReference type="GO" id="GO:0044423">
    <property type="term" value="C:virion component"/>
    <property type="evidence" value="ECO:0007669"/>
    <property type="project" value="UniProtKB-KW"/>
</dbReference>
<dbReference type="GO" id="GO:0005524">
    <property type="term" value="F:ATP binding"/>
    <property type="evidence" value="ECO:0007669"/>
    <property type="project" value="UniProtKB-KW"/>
</dbReference>
<dbReference type="GO" id="GO:0003924">
    <property type="term" value="F:GTPase activity"/>
    <property type="evidence" value="ECO:0007669"/>
    <property type="project" value="RHEA"/>
</dbReference>
<dbReference type="GO" id="GO:0004482">
    <property type="term" value="F:mRNA 5'-cap (guanine-N7-)-methyltransferase activity"/>
    <property type="evidence" value="ECO:0007669"/>
    <property type="project" value="InterPro"/>
</dbReference>
<dbReference type="GO" id="GO:0003968">
    <property type="term" value="F:RNA-directed RNA polymerase activity"/>
    <property type="evidence" value="ECO:0007669"/>
    <property type="project" value="UniProtKB-KW"/>
</dbReference>
<dbReference type="GO" id="GO:0039689">
    <property type="term" value="P:negative stranded viral RNA replication"/>
    <property type="evidence" value="ECO:0000250"/>
    <property type="project" value="UniProtKB"/>
</dbReference>
<dbReference type="GO" id="GO:0039697">
    <property type="term" value="P:negative stranded viral RNA transcription"/>
    <property type="evidence" value="ECO:0000250"/>
    <property type="project" value="UniProtKB"/>
</dbReference>
<dbReference type="InterPro" id="IPR039736">
    <property type="entry name" value="L_poly_C"/>
</dbReference>
<dbReference type="InterPro" id="IPR001611">
    <property type="entry name" value="Leu-rich_rpt"/>
</dbReference>
<dbReference type="InterPro" id="IPR026890">
    <property type="entry name" value="Mononeg_mRNAcap"/>
</dbReference>
<dbReference type="InterPro" id="IPR014023">
    <property type="entry name" value="Mononeg_RNA_pol_cat"/>
</dbReference>
<dbReference type="InterPro" id="IPR025786">
    <property type="entry name" value="Mononega_L_MeTrfase"/>
</dbReference>
<dbReference type="InterPro" id="IPR017235">
    <property type="entry name" value="RNA-dir_pol_L_filovirus"/>
</dbReference>
<dbReference type="NCBIfam" id="TIGR04198">
    <property type="entry name" value="paramyx_RNAcap"/>
    <property type="match status" value="1"/>
</dbReference>
<dbReference type="Pfam" id="PF14318">
    <property type="entry name" value="Mononeg_mRNAcap"/>
    <property type="match status" value="1"/>
</dbReference>
<dbReference type="Pfam" id="PF00946">
    <property type="entry name" value="Mononeg_RNA_pol"/>
    <property type="match status" value="1"/>
</dbReference>
<dbReference type="PIRSF" id="PIRSF037548">
    <property type="entry name" value="RNA_pol_Filoviridae"/>
    <property type="match status" value="1"/>
</dbReference>
<dbReference type="PROSITE" id="PS51450">
    <property type="entry name" value="LRR"/>
    <property type="match status" value="1"/>
</dbReference>
<dbReference type="PROSITE" id="PS50526">
    <property type="entry name" value="RDRP_SSRNA_NEG_NONSEG"/>
    <property type="match status" value="1"/>
</dbReference>
<dbReference type="PROSITE" id="PS51590">
    <property type="entry name" value="SAM_MT_MNV_L"/>
    <property type="match status" value="1"/>
</dbReference>
<accession>Q1PD54</accession>
<gene>
    <name type="primary">L</name>
</gene>
<protein>
    <recommendedName>
        <fullName>RNA-directed RNA polymerase L</fullName>
        <shortName>Protein L</shortName>
    </recommendedName>
    <alternativeName>
        <fullName>Large structural protein</fullName>
    </alternativeName>
    <alternativeName>
        <fullName>Replicase</fullName>
    </alternativeName>
    <alternativeName>
        <fullName>Transcriptase</fullName>
    </alternativeName>
    <domain>
        <recommendedName>
            <fullName>RNA-directed RNA polymerase</fullName>
            <ecNumber evidence="3">2.7.7.48</ecNumber>
        </recommendedName>
    </domain>
    <domain>
        <recommendedName>
            <fullName evidence="2">GTP phosphohydrolase</fullName>
            <ecNumber evidence="2">3.6.1.-</ecNumber>
        </recommendedName>
    </domain>
    <domain>
        <recommendedName>
            <fullName evidence="6">GDP polyribonucleotidyltransferase</fullName>
            <ecNumber evidence="2">2.7.7.88</ecNumber>
        </recommendedName>
        <alternativeName>
            <fullName evidence="6">PRNTase</fullName>
        </alternativeName>
    </domain>
    <domain>
        <recommendedName>
            <fullName evidence="6">mRNA cap methyltransferase</fullName>
            <ecNumber evidence="2">2.1.1.375</ecNumber>
        </recommendedName>
        <alternativeName>
            <fullName evidence="2">mRNA (guanine-N(7)-)-methyltransferase</fullName>
            <shortName evidence="2">G-N7-MTase</shortName>
        </alternativeName>
        <alternativeName>
            <fullName evidence="2">mRNA (nucleoside-2'-O-)-methyltransferase</fullName>
            <shortName evidence="2">N1-2'-O-MTase</shortName>
        </alternativeName>
    </domain>
</protein>
<name>L_MABVA</name>
<reference key="1">
    <citation type="journal article" date="2006" name="J. Virol.">
        <title>Marburgvirus genomics and association with a large hemorrhagic fever outbreak in Angola.</title>
        <authorList>
            <person name="Towner J.S."/>
            <person name="Khristova M.L."/>
            <person name="Sealy T.K."/>
            <person name="Vincent M.J."/>
            <person name="Erickson B.R."/>
            <person name="Bawiec D.A."/>
            <person name="Hartman A.L."/>
            <person name="Comer J.A."/>
            <person name="Zaki S.R."/>
            <person name="Stroeher U."/>
            <person name="Gomes da Silva F."/>
            <person name="del Castillo F."/>
            <person name="Rollin P.E."/>
            <person name="Ksiazek T.G."/>
            <person name="Nichol S.T."/>
        </authorList>
    </citation>
    <scope>NUCLEOTIDE SEQUENCE [GENOMIC RNA]</scope>
    <source>
        <strain>Isolate Ang0126</strain>
        <strain>Isolate Ang0214</strain>
        <strain>Isolate Ang0215</strain>
        <strain>Isolate Ang0754</strain>
        <strain>Isolate Ang1379c</strain>
        <strain>Isolate Ang1381</strain>
        <strain>Isolate Ang1386</strain>
    </source>
</reference>
<sequence>MQHPTQYPDARLSSPIILDQCDLLARSLGLYSHYSHNPKLRNCRIPHHIYRLRNSTALKTFLQNCSILTVPFHSIWDHILTSIQYDAINHVDDFKYLLPSELVKYANWDNEFLKAYLNKILGLNHVFPTSARSQCEDFSPKENPYYWGMLLLVHLSQLARRIKGQRGSLRSNWKFIGTDLELFGIADFVIFKVPVKTIIRNAVSLQASKPGLRVWYRDQNLTPYLCDDEFIVSVASYECFIMIKDVFIERYNTWEICARAWLEDSDGADYPPLDVLGELYNQGDQIIAMYLEDGFKLIKHLEPLCVSCIQTHGIFTPRKYWFQSQMIKSYYDELCCLNLKLQISDNKAECAQNFIKTIIQAKLTPQQYCELFSLQKHWGHPVLYNDVALDKVKKHAQSTKILKPKVMFETFCVFKFIVAKNHYHSQGSWYKTTHDLHLTPYLRQHIVSNSFPSQAEIYQHLWEWYFVEHEPLFSTKIISDLSIFIKDRATAVNQECWDSVFDRSVLGYNPPVRFQSKRVPEQFLGQADFSLNQILDFAEKLEYLAPSYRNFSFSLKEKELNIGRTFGKLPYRVRNVQTLAEALLADGLAKAFPSNMMVVTEREQKEALLHQASWHHNSASIGENAIVRGASFVTDLEKYNLAFRYEFTRHFIDYCNRCYGVKNLFDWMHFLIPLCYMHVSDFYSPPHCVTEDNRNNPPDCANAYHYHLGGIEGLQQKLWTCISCAQITLVELKTKLKLKSSVMGDNQCITTLSLFPVDAPNDYQENEAELNAARVAVELAITTGYSGIFLKPEETFVHSGFIYFGKKQYLNGVQLPQSLKTMARCGPLSDSIFDDLQGSLASIGTSFERGTSETRHIFPSRWIASFHSMLAINLLNQNHLGFPLGFNIDISCFKKPLTFSEKLIALITPQVLGGLSFLNPEKLFYRNISDPLTSGLFQLKNALEFLEKEELFYILIAKKPGLADASDFVMNPLGLNVPGSREIITFLRQTVRENITITSQNRIINSLFHIGSDLEDQRVCEWLLSSNPVMSRFAADIFSRTPSGKRLQVLGYLEGTRTLLASRTISLTTEGTMLMKLRELTRNRWKSWFSYIDALDDDLSESLEKFTCTVDVANFLRAYSWSDVLKGKRLIGATLPCLLEQFKVKWINLSEDLREQFNLSSDAESTINFLPYDCKELRLGGSNDTELNYVSCALDRKVVQKHPSVNRLAWTIGNRAPYIGSRTEDKIGYPPLRVNCPSAALKEAIEMVSRLLWVTQGTADREKLLIPLLNSRVNLDYQTVLNFLPTHYSGNIVHRYNDQYGQHSFMANRMSNTSTRAIISTNTLGKYAGGGQAAIDSNIIFQNTINLGVAVLDIALSLAKLSSSSNVTFRLMLSKCCTRHVPSEYLFFDKPLDVDLNKYMDNELVYDNDPLCSGIKGRLGRVSRSTLSLSLNVSDIGSYDFPTIAAWTLGETIVGSIFSDESSQSTDPISSGCTKTFVTHFLVYPVESIFYAFGANLIVESLSLNRIKSIKNLSDLTFLISSTIRNLSHRSLRILQSTFRHELVLTRLAHHIPLISLMLGGSAGEKSSSDAVRLFLTASYQNFINNFSCLIKKGQSSLPVWLYFPSEGQQLKPILKILQRLSDLFSPDKVQKRKILADTCYPVDSFWVYPSKSTRTNHYYASLNYWRDKANKVKNTPFSHLINCSFLELSSHTISVPSNQQMTNSKYIVHPENIPETNARTELMNYGSTTLQGMDIKMPLSEQNLVENCRPSKGIRCKDNQKIIKHDQRYGKKESSSQQMLPKDNMQTPAYIHGSSPSQTIIKSLDVHEDFDASKVILNSETNNPNLTDCTLNTKFLTTLTGTEILGTSPLQPSRYSSTSKERSLLSREQASYLYVDCSNIPSISLDPGFRNMSDQNQVQMLINAYKRDLHACFDSNQFCRFTGVVSSMHYKLYDLLPPGELRKAICLAEGEGSGARLLLKWKETDYLFFNTLATDSQQEAEILSGRVIPRMLYNIDKLSVLLESRRLILNNLTIQITDITNPLWLDSVIQYLPEDSDILTMDAETTKDETREQLYKTIVNIWTRTSPNIPKISIIKVFLLDYEGTLFLMRNAIQYYGQVQLKKPYSSNAKNSEWYLCCGKRRIQRLQIDFSDQVGIFLICKAMSRQRQAIPYWLKHIEKNYPASLHEFFLTLGFPSLESSFCHRYTIPFSEGKALFHKVQSYVRQGKQHLHSLMLDYENNSPLLDLRNHFICSLRGKITKYYNDILKLNLVIKAVEKGKNWSQLVETLPNMHSVCIVHVDHECFGCEKRLLLKLDFIRNTKIAEQKLLNRVIGYILFFPFGLFKSGSLRA</sequence>
<evidence type="ECO:0000250" key="1"/>
<evidence type="ECO:0000250" key="2">
    <source>
        <dbReference type="UniProtKB" id="P03523"/>
    </source>
</evidence>
<evidence type="ECO:0000250" key="3">
    <source>
        <dbReference type="UniProtKB" id="P28887"/>
    </source>
</evidence>
<evidence type="ECO:0000255" key="4">
    <source>
        <dbReference type="PROSITE-ProRule" id="PRU00539"/>
    </source>
</evidence>
<evidence type="ECO:0000255" key="5">
    <source>
        <dbReference type="PROSITE-ProRule" id="PRU00923"/>
    </source>
</evidence>
<evidence type="ECO:0000305" key="6"/>
<comment type="function">
    <text evidence="2">RNA-directed RNA polymerase that catalyzes the transcription of viral mRNAs, their capping and polyadenylation. The template is composed of the viral RNA tightly encapsidated by the nucleoprotein (N). The viral polymerase binds to the genomic RNA at the 3' leader promoter, and transcribes subsequently all viral mRNAs with a decreasing efficiency. The first gene is the most transcribed, and the last the least transcribed. The viral phosphoprotein acts as a processivity factor. Capping is concomitant with initiation of mRNA transcription. Indeed, a GDP polyribonucleotidyl transferase (PRNTase) adds the cap structure when the nascent RNA chain length has reached few nucleotides. Ribose 2'-O methylation of viral mRNA cap precedes and facilitates subsequent guanine-N-7 methylation, both activities being carried by the viral polymerase. Polyadenylation of mRNAs occur by a stuttering mechanism at a slipery stop site present at the end viral genes. After finishing transcription of a mRNA, the polymerase can resume transcription of the downstream gene.</text>
</comment>
<comment type="function">
    <text evidence="2">RNA-directed RNA polymerase that catalyzes the replication of viral genomic RNA. The template is composed of the viral RNA tightly encapsidated by the nucleoprotein (N). The replicase mode is dependent on intracellular N protein concentration. In this mode, the polymerase replicates the whole viral genome without recognizing transcriptional signals, and the replicated genome is not caped or polyadenylated.</text>
</comment>
<comment type="catalytic activity">
    <reaction evidence="4">
        <text>RNA(n) + a ribonucleoside 5'-triphosphate = RNA(n+1) + diphosphate</text>
        <dbReference type="Rhea" id="RHEA:21248"/>
        <dbReference type="Rhea" id="RHEA-COMP:14527"/>
        <dbReference type="Rhea" id="RHEA-COMP:17342"/>
        <dbReference type="ChEBI" id="CHEBI:33019"/>
        <dbReference type="ChEBI" id="CHEBI:61557"/>
        <dbReference type="ChEBI" id="CHEBI:140395"/>
        <dbReference type="EC" id="2.7.7.48"/>
    </reaction>
</comment>
<comment type="catalytic activity">
    <reaction evidence="2">
        <text>a 5'-end (5'-triphosphoguanosine)-adenylyl-adenylyl-cytidylyl-adenosine in mRNA + 2 S-adenosyl-L-methionine = a 5'-end (N(7)-methyl 5'-triphosphoguanosine)-(2'-O-methyladenylyl)-adenylyl-cytidylyl-adenosine in mRNA + 2 S-adenosyl-L-homocysteine + H(+)</text>
        <dbReference type="Rhea" id="RHEA:65376"/>
        <dbReference type="Rhea" id="RHEA-COMP:16797"/>
        <dbReference type="Rhea" id="RHEA-COMP:16798"/>
        <dbReference type="ChEBI" id="CHEBI:15378"/>
        <dbReference type="ChEBI" id="CHEBI:57856"/>
        <dbReference type="ChEBI" id="CHEBI:59789"/>
        <dbReference type="ChEBI" id="CHEBI:156483"/>
        <dbReference type="ChEBI" id="CHEBI:156484"/>
        <dbReference type="EC" id="2.1.1.375"/>
    </reaction>
</comment>
<comment type="catalytic activity">
    <reaction evidence="2">
        <text>a 5'-end (5'-triphosphoguanosine)-adenylyl-adenylyl-cytidylyl-adenosine in mRNA + S-adenosyl-L-methionine = a 5'-end (5'-triphosphoguanosine)-(2'-O-methyladenylyl)-adenylyl-cytidylyl-adenosine in mRNA + S-adenosyl-L-homocysteine + H(+)</text>
        <dbReference type="Rhea" id="RHEA:65380"/>
        <dbReference type="Rhea" id="RHEA-COMP:16797"/>
        <dbReference type="Rhea" id="RHEA-COMP:16801"/>
        <dbReference type="ChEBI" id="CHEBI:15378"/>
        <dbReference type="ChEBI" id="CHEBI:57856"/>
        <dbReference type="ChEBI" id="CHEBI:59789"/>
        <dbReference type="ChEBI" id="CHEBI:156482"/>
        <dbReference type="ChEBI" id="CHEBI:156484"/>
    </reaction>
</comment>
<comment type="catalytic activity">
    <reaction evidence="3">
        <text>a 5'-end triphospho-adenylyl-adenylyl-cytidylyl-adenosine in mRNA + GDP + H(+) = a 5'-end (5'-triphosphoguanosine)-adenylyl-adenylyl-cytidylyl-adenosine in mRNA + diphosphate</text>
        <dbReference type="Rhea" id="RHEA:65436"/>
        <dbReference type="Rhea" id="RHEA-COMP:16797"/>
        <dbReference type="Rhea" id="RHEA-COMP:16799"/>
        <dbReference type="ChEBI" id="CHEBI:15378"/>
        <dbReference type="ChEBI" id="CHEBI:33019"/>
        <dbReference type="ChEBI" id="CHEBI:58189"/>
        <dbReference type="ChEBI" id="CHEBI:156484"/>
        <dbReference type="ChEBI" id="CHEBI:156503"/>
        <dbReference type="EC" id="2.7.7.88"/>
    </reaction>
</comment>
<comment type="catalytic activity">
    <reaction evidence="2">
        <text>a 5'-end (5'-triphosphoguanosine)-(2'-O-methyladenylyl)-adenylyl-cytidylyl-adenosine in mRNA + S-adenosyl-L-methionine = a 5'-end (N(7)-methyl 5'-triphosphoguanosine)-(2'-O-methyladenylyl)-adenylyl-cytidylyl-adenosine in mRNA + S-adenosyl-L-homocysteine</text>
        <dbReference type="Rhea" id="RHEA:65440"/>
        <dbReference type="Rhea" id="RHEA-COMP:16798"/>
        <dbReference type="Rhea" id="RHEA-COMP:16801"/>
        <dbReference type="ChEBI" id="CHEBI:57856"/>
        <dbReference type="ChEBI" id="CHEBI:59789"/>
        <dbReference type="ChEBI" id="CHEBI:156482"/>
        <dbReference type="ChEBI" id="CHEBI:156483"/>
    </reaction>
</comment>
<comment type="catalytic activity">
    <reaction evidence="3">
        <text>GTP + H2O = GDP + phosphate + H(+)</text>
        <dbReference type="Rhea" id="RHEA:19669"/>
        <dbReference type="ChEBI" id="CHEBI:15377"/>
        <dbReference type="ChEBI" id="CHEBI:15378"/>
        <dbReference type="ChEBI" id="CHEBI:37565"/>
        <dbReference type="ChEBI" id="CHEBI:43474"/>
        <dbReference type="ChEBI" id="CHEBI:58189"/>
    </reaction>
</comment>
<comment type="subcellular location">
    <subcellularLocation>
        <location>Host cytoplasm</location>
    </subcellularLocation>
    <subcellularLocation>
        <location evidence="1">Virion</location>
    </subcellularLocation>
</comment>
<keyword id="KW-0067">ATP-binding</keyword>
<keyword id="KW-1035">Host cytoplasm</keyword>
<keyword id="KW-0378">Hydrolase</keyword>
<keyword id="KW-0489">Methyltransferase</keyword>
<keyword id="KW-0506">mRNA capping</keyword>
<keyword id="KW-0507">mRNA processing</keyword>
<keyword id="KW-0511">Multifunctional enzyme</keyword>
<keyword id="KW-0547">Nucleotide-binding</keyword>
<keyword id="KW-0548">Nucleotidyltransferase</keyword>
<keyword id="KW-0696">RNA-directed RNA polymerase</keyword>
<keyword id="KW-0949">S-adenosyl-L-methionine</keyword>
<keyword id="KW-0808">Transferase</keyword>
<keyword id="KW-0693">Viral RNA replication</keyword>
<keyword id="KW-0946">Virion</keyword>
<proteinExistence type="inferred from homology"/>
<feature type="chain" id="PRO_0000314970" description="RNA-directed RNA polymerase L">
    <location>
        <begin position="1"/>
        <end position="2331"/>
    </location>
</feature>
<feature type="domain" description="RdRp catalytic" evidence="4">
    <location>
        <begin position="628"/>
        <end position="812"/>
    </location>
</feature>
<feature type="domain" description="Mononegavirus-type SAM-dependent 2'-O-MTase" evidence="5">
    <location>
        <begin position="1921"/>
        <end position="2118"/>
    </location>
</feature>
<organismHost>
    <name type="scientific">Chlorocebus aethiops</name>
    <name type="common">Green monkey</name>
    <name type="synonym">Cercopithecus aethiops</name>
    <dbReference type="NCBI Taxonomy" id="9534"/>
</organismHost>
<organismHost>
    <name type="scientific">Homo sapiens</name>
    <name type="common">Human</name>
    <dbReference type="NCBI Taxonomy" id="9606"/>
</organismHost>
<organismHost>
    <name type="scientific">Rousettus aegyptiacus</name>
    <name type="common">Egyptian fruit bat</name>
    <name type="synonym">Pteropus aegyptiacus</name>
    <dbReference type="NCBI Taxonomy" id="9407"/>
</organismHost>